<organism>
    <name type="scientific">Escherichia coli (strain K12)</name>
    <dbReference type="NCBI Taxonomy" id="83333"/>
    <lineage>
        <taxon>Bacteria</taxon>
        <taxon>Pseudomonadati</taxon>
        <taxon>Pseudomonadota</taxon>
        <taxon>Gammaproteobacteria</taxon>
        <taxon>Enterobacterales</taxon>
        <taxon>Enterobacteriaceae</taxon>
        <taxon>Escherichia</taxon>
    </lineage>
</organism>
<keyword id="KW-0963">Cytoplasm</keyword>
<keyword id="KW-0903">Direct protein sequencing</keyword>
<keyword id="KW-1185">Reference proteome</keyword>
<keyword id="KW-0704">Schiff base</keyword>
<keyword id="KW-0784">Thiamine biosynthesis</keyword>
<keyword id="KW-0808">Transferase</keyword>
<evidence type="ECO:0000250" key="1"/>
<evidence type="ECO:0000269" key="2">
    <source>
    </source>
</evidence>
<evidence type="ECO:0000269" key="3">
    <source>
    </source>
</evidence>
<evidence type="ECO:0000305" key="4"/>
<gene>
    <name type="primary">thiG</name>
    <name type="ordered locus">b3991</name>
    <name type="ordered locus">JW5549</name>
</gene>
<sequence length="256" mass="26896">MLRIADKTFDSHLFTGTGKFASSQLMVEAIRASGSQLVTLAMKRVDLRQHNDAILEPLIAAGVTLLPNTSGAKTAEEAIFAAHLAREALGTNWLKLEIHPDARWLLPDPIETLKAAETLVQQGFVVLPYCGADPVLCKRLEEVGCAAVMPLGAPIGSNQGLETRAMLEIIIQQATVPVVVDAGIGVPSHAAQALEMGADAVLVNTAIAVADDPVNMAKAFRLAVEAGLLARQSGPGSRSYFAHATSPLTGFLEASA</sequence>
<name>THIG_ECOLI</name>
<proteinExistence type="evidence at protein level"/>
<reference key="1">
    <citation type="journal article" date="1993" name="J. Bacteriol.">
        <title>Structural genes for thiamine biosynthetic enzymes (thiCEFGH) in Escherichia coli K-12.</title>
        <authorList>
            <person name="Vander Horn P.B."/>
            <person name="Backstrom A.D."/>
            <person name="Stewart V."/>
            <person name="Begley T.P."/>
        </authorList>
    </citation>
    <scope>NUCLEOTIDE SEQUENCE [GENOMIC DNA]</scope>
    <source>
        <strain>K12</strain>
    </source>
</reference>
<reference key="2">
    <citation type="journal article" date="1993" name="Nucleic Acids Res.">
        <title>Analysis of the Escherichia coli genome. IV. DNA sequence of the region from 89.2 to 92.8 minutes.</title>
        <authorList>
            <person name="Blattner F.R."/>
            <person name="Burland V.D."/>
            <person name="Plunkett G. III"/>
            <person name="Sofia H.J."/>
            <person name="Daniels D.L."/>
        </authorList>
    </citation>
    <scope>NUCLEOTIDE SEQUENCE [LARGE SCALE GENOMIC DNA]</scope>
    <source>
        <strain>K12 / MG1655 / ATCC 47076</strain>
    </source>
</reference>
<reference key="3">
    <citation type="journal article" date="1997" name="Science">
        <title>The complete genome sequence of Escherichia coli K-12.</title>
        <authorList>
            <person name="Blattner F.R."/>
            <person name="Plunkett G. III"/>
            <person name="Bloch C.A."/>
            <person name="Perna N.T."/>
            <person name="Burland V."/>
            <person name="Riley M."/>
            <person name="Collado-Vides J."/>
            <person name="Glasner J.D."/>
            <person name="Rode C.K."/>
            <person name="Mayhew G.F."/>
            <person name="Gregor J."/>
            <person name="Davis N.W."/>
            <person name="Kirkpatrick H.A."/>
            <person name="Goeden M.A."/>
            <person name="Rose D.J."/>
            <person name="Mau B."/>
            <person name="Shao Y."/>
        </authorList>
    </citation>
    <scope>NUCLEOTIDE SEQUENCE [LARGE SCALE GENOMIC DNA]</scope>
    <source>
        <strain>K12 / MG1655 / ATCC 47076</strain>
    </source>
</reference>
<reference key="4">
    <citation type="journal article" date="2006" name="Mol. Syst. Biol.">
        <title>Highly accurate genome sequences of Escherichia coli K-12 strains MG1655 and W3110.</title>
        <authorList>
            <person name="Hayashi K."/>
            <person name="Morooka N."/>
            <person name="Yamamoto Y."/>
            <person name="Fujita K."/>
            <person name="Isono K."/>
            <person name="Choi S."/>
            <person name="Ohtsubo E."/>
            <person name="Baba T."/>
            <person name="Wanner B.L."/>
            <person name="Mori H."/>
            <person name="Horiuchi T."/>
        </authorList>
    </citation>
    <scope>NUCLEOTIDE SEQUENCE [LARGE SCALE GENOMIC DNA]</scope>
    <source>
        <strain>K12 / W3110 / ATCC 27325 / DSM 5911</strain>
    </source>
</reference>
<reference key="5">
    <citation type="journal article" date="2003" name="FEBS Lett.">
        <title>Thiamine biosynthesis in Escherichia coli: isolation and initial characterisation of the ThiGH complex.</title>
        <authorList>
            <person name="Leonardi R."/>
            <person name="Fairhurst S.A."/>
            <person name="Kriek M."/>
            <person name="Lowe D.J."/>
            <person name="Roach P.L."/>
        </authorList>
    </citation>
    <scope>PROTEIN SEQUENCE OF 1-7</scope>
    <scope>FUNCTION</scope>
    <scope>MASS SPECTROMETRY</scope>
    <scope>SUBUNIT</scope>
    <scope>INTERACTION WITH THIH</scope>
</reference>
<reference key="6">
    <citation type="journal article" date="1998" name="Protein Sci.">
        <title>Efficient sequence analysis of the six gene products (7-74 kDa) from the Escherichia coli thiamin biosynthetic operon by tandem high-resolution mass spectrometry.</title>
        <authorList>
            <person name="Kelleher N.L."/>
            <person name="Taylor S.V."/>
            <person name="Grannis D."/>
            <person name="Kinsland C."/>
            <person name="Chiu H.-J."/>
            <person name="Begley T.P."/>
            <person name="McLafferty F.W."/>
        </authorList>
    </citation>
    <scope>MASS SPECTROMETRY</scope>
</reference>
<feature type="chain" id="PRO_0000162815" description="Thiazole synthase">
    <location>
        <begin position="1"/>
        <end position="256"/>
    </location>
</feature>
<feature type="active site" description="Schiff-base intermediate with DXP" evidence="1">
    <location>
        <position position="95"/>
    </location>
</feature>
<feature type="binding site" evidence="1">
    <location>
        <position position="156"/>
    </location>
    <ligand>
        <name>1-deoxy-D-xylulose 5-phosphate</name>
        <dbReference type="ChEBI" id="CHEBI:57792"/>
    </ligand>
</feature>
<feature type="binding site" evidence="1">
    <location>
        <begin position="182"/>
        <end position="183"/>
    </location>
    <ligand>
        <name>1-deoxy-D-xylulose 5-phosphate</name>
        <dbReference type="ChEBI" id="CHEBI:57792"/>
    </ligand>
</feature>
<feature type="binding site" evidence="1">
    <location>
        <begin position="204"/>
        <end position="205"/>
    </location>
    <ligand>
        <name>1-deoxy-D-xylulose 5-phosphate</name>
        <dbReference type="ChEBI" id="CHEBI:57792"/>
    </ligand>
</feature>
<accession>P30139</accession>
<accession>P76779</accession>
<accession>Q2M8S7</accession>
<protein>
    <recommendedName>
        <fullName>Thiazole synthase</fullName>
        <ecNumber>2.8.1.10</ecNumber>
    </recommendedName>
</protein>
<comment type="function">
    <text evidence="3">Catalyzes the rearrangement of 1-deoxy-D-xylulose 5-phosphate (DXP) to produce the thiazole phosphate moiety of thiamine. Sulfur is provided by the thiocarboxylate moiety of the carrier protein ThiS. In vitro, sulfur can be provided by H(2)S.</text>
</comment>
<comment type="catalytic activity">
    <reaction>
        <text>[ThiS sulfur-carrier protein]-C-terminal-Gly-aminoethanethioate + 2-iminoacetate + 1-deoxy-D-xylulose 5-phosphate = [ThiS sulfur-carrier protein]-C-terminal Gly-Gly + 2-[(2R,5Z)-2-carboxy-4-methylthiazol-5(2H)-ylidene]ethyl phosphate + 2 H2O + H(+)</text>
        <dbReference type="Rhea" id="RHEA:26297"/>
        <dbReference type="Rhea" id="RHEA-COMP:12909"/>
        <dbReference type="Rhea" id="RHEA-COMP:19908"/>
        <dbReference type="ChEBI" id="CHEBI:15377"/>
        <dbReference type="ChEBI" id="CHEBI:15378"/>
        <dbReference type="ChEBI" id="CHEBI:57792"/>
        <dbReference type="ChEBI" id="CHEBI:62899"/>
        <dbReference type="ChEBI" id="CHEBI:77846"/>
        <dbReference type="ChEBI" id="CHEBI:90778"/>
        <dbReference type="ChEBI" id="CHEBI:232372"/>
        <dbReference type="EC" id="2.8.1.10"/>
    </reaction>
</comment>
<comment type="pathway">
    <text>Cofactor biosynthesis; thiamine diphosphate biosynthesis.</text>
</comment>
<comment type="subunit">
    <text evidence="3">Homotetramer. Forms heterodimers with either ThiH or ThiS.</text>
</comment>
<comment type="interaction">
    <interactant intactId="EBI-547059">
        <id>P30139</id>
    </interactant>
    <interactant intactId="EBI-550170">
        <id>P0A6R3</id>
        <label>fis</label>
    </interactant>
    <organismsDiffer>false</organismsDiffer>
    <experiments>3</experiments>
</comment>
<comment type="interaction">
    <interactant intactId="EBI-547059">
        <id>P30139</id>
    </interactant>
    <interactant intactId="EBI-1125553">
        <id>P30140</id>
        <label>thiH</label>
    </interactant>
    <organismsDiffer>false</organismsDiffer>
    <experiments>2</experiments>
</comment>
<comment type="subcellular location">
    <subcellularLocation>
        <location>Cytoplasm</location>
    </subcellularLocation>
</comment>
<comment type="mass spectrometry" mass="26893.3" method="Electrospray" evidence="3"/>
<comment type="mass spectrometry" mass="26896.5" method="Electrospray" evidence="2"/>
<comment type="similarity">
    <text evidence="4">Belongs to the ThiG family.</text>
</comment>
<comment type="sequence caution" evidence="4">
    <conflict type="erroneous initiation">
        <sequence resource="EMBL-CDS" id="AAC43089"/>
    </conflict>
</comment>
<dbReference type="EC" id="2.8.1.10"/>
<dbReference type="EMBL" id="M88701">
    <property type="protein sequence ID" value="AAB95621.1"/>
    <property type="molecule type" value="Genomic_DNA"/>
</dbReference>
<dbReference type="EMBL" id="U00006">
    <property type="protein sequence ID" value="AAC43089.1"/>
    <property type="status" value="ALT_INIT"/>
    <property type="molecule type" value="Genomic_DNA"/>
</dbReference>
<dbReference type="EMBL" id="U00096">
    <property type="protein sequence ID" value="AAC76965.2"/>
    <property type="molecule type" value="Genomic_DNA"/>
</dbReference>
<dbReference type="EMBL" id="AP009048">
    <property type="protein sequence ID" value="BAE77329.1"/>
    <property type="molecule type" value="Genomic_DNA"/>
</dbReference>
<dbReference type="PIR" id="B65206">
    <property type="entry name" value="B65206"/>
</dbReference>
<dbReference type="RefSeq" id="NP_418418.2">
    <property type="nucleotide sequence ID" value="NC_000913.3"/>
</dbReference>
<dbReference type="RefSeq" id="WP_000944104.1">
    <property type="nucleotide sequence ID" value="NZ_SSZK01000047.1"/>
</dbReference>
<dbReference type="SMR" id="P30139"/>
<dbReference type="BioGRID" id="4262656">
    <property type="interactions" value="19"/>
</dbReference>
<dbReference type="ComplexPortal" id="CPX-2135">
    <property type="entry name" value="thiG-thiH thiazole phosphate synthase complex"/>
</dbReference>
<dbReference type="DIP" id="DIP-6868N"/>
<dbReference type="FunCoup" id="P30139">
    <property type="interactions" value="482"/>
</dbReference>
<dbReference type="IntAct" id="P30139">
    <property type="interactions" value="10"/>
</dbReference>
<dbReference type="STRING" id="511145.b3991"/>
<dbReference type="PaxDb" id="511145-b3991"/>
<dbReference type="EnsemblBacteria" id="AAC76965">
    <property type="protein sequence ID" value="AAC76965"/>
    <property type="gene ID" value="b3991"/>
</dbReference>
<dbReference type="GeneID" id="948493"/>
<dbReference type="KEGG" id="ecj:JW5549"/>
<dbReference type="KEGG" id="eco:b3991"/>
<dbReference type="KEGG" id="ecoc:C3026_21555"/>
<dbReference type="PATRIC" id="fig|1411691.4.peg.2721"/>
<dbReference type="EchoBASE" id="EB1547"/>
<dbReference type="eggNOG" id="COG2022">
    <property type="taxonomic scope" value="Bacteria"/>
</dbReference>
<dbReference type="HOGENOM" id="CLU_062233_1_0_6"/>
<dbReference type="InParanoid" id="P30139"/>
<dbReference type="OMA" id="PHNFQLI"/>
<dbReference type="OrthoDB" id="9805935at2"/>
<dbReference type="PhylomeDB" id="P30139"/>
<dbReference type="BioCyc" id="EcoCyc:THIG-MONOMER"/>
<dbReference type="BioCyc" id="MetaCyc:THIG-MONOMER"/>
<dbReference type="BRENDA" id="2.8.1.10">
    <property type="organism ID" value="2026"/>
</dbReference>
<dbReference type="UniPathway" id="UPA00060"/>
<dbReference type="PRO" id="PR:P30139"/>
<dbReference type="Proteomes" id="UP000000625">
    <property type="component" value="Chromosome"/>
</dbReference>
<dbReference type="GO" id="GO:1902508">
    <property type="term" value="C:2-iminoacetate synthase complex"/>
    <property type="evidence" value="ECO:0000353"/>
    <property type="project" value="ComplexPortal"/>
</dbReference>
<dbReference type="GO" id="GO:0005829">
    <property type="term" value="C:cytosol"/>
    <property type="evidence" value="ECO:0000314"/>
    <property type="project" value="EcoCyc"/>
</dbReference>
<dbReference type="GO" id="GO:1990107">
    <property type="term" value="F:thiazole synthase activity"/>
    <property type="evidence" value="ECO:0007669"/>
    <property type="project" value="UniProtKB-EC"/>
</dbReference>
<dbReference type="GO" id="GO:0009228">
    <property type="term" value="P:thiamine biosynthetic process"/>
    <property type="evidence" value="ECO:0000315"/>
    <property type="project" value="EcoCyc"/>
</dbReference>
<dbReference type="GO" id="GO:0009229">
    <property type="term" value="P:thiamine diphosphate biosynthetic process"/>
    <property type="evidence" value="ECO:0000314"/>
    <property type="project" value="ComplexPortal"/>
</dbReference>
<dbReference type="CDD" id="cd04728">
    <property type="entry name" value="ThiG"/>
    <property type="match status" value="1"/>
</dbReference>
<dbReference type="FunFam" id="3.20.20.70:FF:000049">
    <property type="entry name" value="Thiazole synthase"/>
    <property type="match status" value="1"/>
</dbReference>
<dbReference type="Gene3D" id="3.20.20.70">
    <property type="entry name" value="Aldolase class I"/>
    <property type="match status" value="1"/>
</dbReference>
<dbReference type="HAMAP" id="MF_00443">
    <property type="entry name" value="ThiG"/>
    <property type="match status" value="1"/>
</dbReference>
<dbReference type="InterPro" id="IPR013785">
    <property type="entry name" value="Aldolase_TIM"/>
</dbReference>
<dbReference type="InterPro" id="IPR033983">
    <property type="entry name" value="Thiazole_synthase_ThiG"/>
</dbReference>
<dbReference type="InterPro" id="IPR008867">
    <property type="entry name" value="ThiG"/>
</dbReference>
<dbReference type="PANTHER" id="PTHR34266">
    <property type="entry name" value="THIAZOLE SYNTHASE"/>
    <property type="match status" value="1"/>
</dbReference>
<dbReference type="PANTHER" id="PTHR34266:SF2">
    <property type="entry name" value="THIAZOLE SYNTHASE"/>
    <property type="match status" value="1"/>
</dbReference>
<dbReference type="Pfam" id="PF05690">
    <property type="entry name" value="ThiG"/>
    <property type="match status" value="1"/>
</dbReference>
<dbReference type="SUPFAM" id="SSF110399">
    <property type="entry name" value="ThiG-like"/>
    <property type="match status" value="1"/>
</dbReference>